<keyword id="KW-0025">Alternative splicing</keyword>
<keyword id="KW-0175">Coiled coil</keyword>
<keyword id="KW-0963">Cytoplasm</keyword>
<keyword id="KW-0597">Phosphoprotein</keyword>
<keyword id="KW-1185">Reference proteome</keyword>
<keyword id="KW-0677">Repeat</keyword>
<feature type="chain" id="PRO_0000311851" description="Serine/threonine-protein phosphatase 4 regulatory subunit 4">
    <location>
        <begin position="1"/>
        <end position="875"/>
    </location>
</feature>
<feature type="repeat" description="HEAT 1">
    <location>
        <begin position="215"/>
        <end position="253"/>
    </location>
</feature>
<feature type="repeat" description="HEAT 2">
    <location>
        <begin position="254"/>
        <end position="292"/>
    </location>
</feature>
<feature type="region of interest" description="Disordered" evidence="3">
    <location>
        <begin position="718"/>
        <end position="773"/>
    </location>
</feature>
<feature type="region of interest" description="Disordered" evidence="3">
    <location>
        <begin position="825"/>
        <end position="875"/>
    </location>
</feature>
<feature type="coiled-coil region" evidence="2">
    <location>
        <begin position="686"/>
        <end position="730"/>
    </location>
</feature>
<feature type="compositionally biased region" description="Basic and acidic residues" evidence="3">
    <location>
        <begin position="718"/>
        <end position="739"/>
    </location>
</feature>
<feature type="compositionally biased region" description="Polar residues" evidence="3">
    <location>
        <begin position="740"/>
        <end position="764"/>
    </location>
</feature>
<feature type="compositionally biased region" description="Polar residues" evidence="3">
    <location>
        <begin position="825"/>
        <end position="859"/>
    </location>
</feature>
<feature type="compositionally biased region" description="Basic residues" evidence="3">
    <location>
        <begin position="866"/>
        <end position="875"/>
    </location>
</feature>
<feature type="modified residue" description="Phosphoserine" evidence="8">
    <location>
        <position position="777"/>
    </location>
</feature>
<feature type="modified residue" description="Phosphothreonine" evidence="8">
    <location>
        <position position="799"/>
    </location>
</feature>
<feature type="splice variant" id="VSP_029618" description="In isoform 3." evidence="4 6">
    <location>
        <begin position="1"/>
        <end position="109"/>
    </location>
</feature>
<feature type="splice variant" id="VSP_029619" description="In isoform 2." evidence="5">
    <original>SKEIKKSKLTRSQSFNNQAFHAKYGTL</original>
    <variation>REKSPSASQNSGSLFSLHEIPESVLVP</variation>
    <location>
        <begin position="764"/>
        <end position="790"/>
    </location>
</feature>
<feature type="splice variant" id="VSP_029620" description="In isoform 2." evidence="5">
    <location>
        <begin position="791"/>
        <end position="875"/>
    </location>
</feature>
<feature type="sequence conflict" description="In Ref. 1; BAD32499." evidence="7" ref="1">
    <original>RMKLCYLL</original>
    <variation>SCLLM</variation>
    <location>
        <begin position="624"/>
        <end position="631"/>
    </location>
</feature>
<feature type="sequence conflict" description="In Ref. 2; BAC26478." evidence="7" ref="2">
    <original>K</original>
    <variation>Q</variation>
    <location>
        <position position="792"/>
    </location>
</feature>
<feature type="sequence conflict" description="In Ref. 4; AAI11888." evidence="7" ref="4">
    <original>R</original>
    <variation>G</variation>
    <location>
        <position position="811"/>
    </location>
</feature>
<protein>
    <recommendedName>
        <fullName>Serine/threonine-protein phosphatase 4 regulatory subunit 4</fullName>
    </recommendedName>
</protein>
<evidence type="ECO:0000250" key="1"/>
<evidence type="ECO:0000255" key="2"/>
<evidence type="ECO:0000256" key="3">
    <source>
        <dbReference type="SAM" id="MobiDB-lite"/>
    </source>
</evidence>
<evidence type="ECO:0000303" key="4">
    <source>
    </source>
</evidence>
<evidence type="ECO:0000303" key="5">
    <source>
    </source>
</evidence>
<evidence type="ECO:0000303" key="6">
    <source>
    </source>
</evidence>
<evidence type="ECO:0000305" key="7"/>
<evidence type="ECO:0007744" key="8">
    <source>
    </source>
</evidence>
<organism>
    <name type="scientific">Mus musculus</name>
    <name type="common">Mouse</name>
    <dbReference type="NCBI Taxonomy" id="10090"/>
    <lineage>
        <taxon>Eukaryota</taxon>
        <taxon>Metazoa</taxon>
        <taxon>Chordata</taxon>
        <taxon>Craniata</taxon>
        <taxon>Vertebrata</taxon>
        <taxon>Euteleostomi</taxon>
        <taxon>Mammalia</taxon>
        <taxon>Eutheria</taxon>
        <taxon>Euarchontoglires</taxon>
        <taxon>Glires</taxon>
        <taxon>Rodentia</taxon>
        <taxon>Myomorpha</taxon>
        <taxon>Muroidea</taxon>
        <taxon>Muridae</taxon>
        <taxon>Murinae</taxon>
        <taxon>Mus</taxon>
        <taxon>Mus</taxon>
    </lineage>
</organism>
<reference key="1">
    <citation type="journal article" date="2004" name="DNA Res.">
        <title>Prediction of the coding sequences of mouse homologues of KIAA gene: IV. The complete nucleotide sequences of 500 mouse KIAA-homologous cDNAs identified by screening of terminal sequences of cDNA clones randomly sampled from size-fractionated libraries.</title>
        <authorList>
            <person name="Okazaki N."/>
            <person name="Kikuno R."/>
            <person name="Ohara R."/>
            <person name="Inamoto S."/>
            <person name="Koseki H."/>
            <person name="Hiraoka S."/>
            <person name="Saga Y."/>
            <person name="Seino S."/>
            <person name="Nishimura M."/>
            <person name="Kaisho T."/>
            <person name="Hoshino K."/>
            <person name="Kitamura H."/>
            <person name="Nagase T."/>
            <person name="Ohara O."/>
            <person name="Koga H."/>
        </authorList>
    </citation>
    <scope>NUCLEOTIDE SEQUENCE [LARGE SCALE MRNA] (ISOFORM 3)</scope>
    <source>
        <tissue>Pancreatic islet</tissue>
    </source>
</reference>
<reference key="2">
    <citation type="journal article" date="2005" name="Science">
        <title>The transcriptional landscape of the mammalian genome.</title>
        <authorList>
            <person name="Carninci P."/>
            <person name="Kasukawa T."/>
            <person name="Katayama S."/>
            <person name="Gough J."/>
            <person name="Frith M.C."/>
            <person name="Maeda N."/>
            <person name="Oyama R."/>
            <person name="Ravasi T."/>
            <person name="Lenhard B."/>
            <person name="Wells C."/>
            <person name="Kodzius R."/>
            <person name="Shimokawa K."/>
            <person name="Bajic V.B."/>
            <person name="Brenner S.E."/>
            <person name="Batalov S."/>
            <person name="Forrest A.R."/>
            <person name="Zavolan M."/>
            <person name="Davis M.J."/>
            <person name="Wilming L.G."/>
            <person name="Aidinis V."/>
            <person name="Allen J.E."/>
            <person name="Ambesi-Impiombato A."/>
            <person name="Apweiler R."/>
            <person name="Aturaliya R.N."/>
            <person name="Bailey T.L."/>
            <person name="Bansal M."/>
            <person name="Baxter L."/>
            <person name="Beisel K.W."/>
            <person name="Bersano T."/>
            <person name="Bono H."/>
            <person name="Chalk A.M."/>
            <person name="Chiu K.P."/>
            <person name="Choudhary V."/>
            <person name="Christoffels A."/>
            <person name="Clutterbuck D.R."/>
            <person name="Crowe M.L."/>
            <person name="Dalla E."/>
            <person name="Dalrymple B.P."/>
            <person name="de Bono B."/>
            <person name="Della Gatta G."/>
            <person name="di Bernardo D."/>
            <person name="Down T."/>
            <person name="Engstrom P."/>
            <person name="Fagiolini M."/>
            <person name="Faulkner G."/>
            <person name="Fletcher C.F."/>
            <person name="Fukushima T."/>
            <person name="Furuno M."/>
            <person name="Futaki S."/>
            <person name="Gariboldi M."/>
            <person name="Georgii-Hemming P."/>
            <person name="Gingeras T.R."/>
            <person name="Gojobori T."/>
            <person name="Green R.E."/>
            <person name="Gustincich S."/>
            <person name="Harbers M."/>
            <person name="Hayashi Y."/>
            <person name="Hensch T.K."/>
            <person name="Hirokawa N."/>
            <person name="Hill D."/>
            <person name="Huminiecki L."/>
            <person name="Iacono M."/>
            <person name="Ikeo K."/>
            <person name="Iwama A."/>
            <person name="Ishikawa T."/>
            <person name="Jakt M."/>
            <person name="Kanapin A."/>
            <person name="Katoh M."/>
            <person name="Kawasawa Y."/>
            <person name="Kelso J."/>
            <person name="Kitamura H."/>
            <person name="Kitano H."/>
            <person name="Kollias G."/>
            <person name="Krishnan S.P."/>
            <person name="Kruger A."/>
            <person name="Kummerfeld S.K."/>
            <person name="Kurochkin I.V."/>
            <person name="Lareau L.F."/>
            <person name="Lazarevic D."/>
            <person name="Lipovich L."/>
            <person name="Liu J."/>
            <person name="Liuni S."/>
            <person name="McWilliam S."/>
            <person name="Madan Babu M."/>
            <person name="Madera M."/>
            <person name="Marchionni L."/>
            <person name="Matsuda H."/>
            <person name="Matsuzawa S."/>
            <person name="Miki H."/>
            <person name="Mignone F."/>
            <person name="Miyake S."/>
            <person name="Morris K."/>
            <person name="Mottagui-Tabar S."/>
            <person name="Mulder N."/>
            <person name="Nakano N."/>
            <person name="Nakauchi H."/>
            <person name="Ng P."/>
            <person name="Nilsson R."/>
            <person name="Nishiguchi S."/>
            <person name="Nishikawa S."/>
            <person name="Nori F."/>
            <person name="Ohara O."/>
            <person name="Okazaki Y."/>
            <person name="Orlando V."/>
            <person name="Pang K.C."/>
            <person name="Pavan W.J."/>
            <person name="Pavesi G."/>
            <person name="Pesole G."/>
            <person name="Petrovsky N."/>
            <person name="Piazza S."/>
            <person name="Reed J."/>
            <person name="Reid J.F."/>
            <person name="Ring B.Z."/>
            <person name="Ringwald M."/>
            <person name="Rost B."/>
            <person name="Ruan Y."/>
            <person name="Salzberg S.L."/>
            <person name="Sandelin A."/>
            <person name="Schneider C."/>
            <person name="Schoenbach C."/>
            <person name="Sekiguchi K."/>
            <person name="Semple C.A."/>
            <person name="Seno S."/>
            <person name="Sessa L."/>
            <person name="Sheng Y."/>
            <person name="Shibata Y."/>
            <person name="Shimada H."/>
            <person name="Shimada K."/>
            <person name="Silva D."/>
            <person name="Sinclair B."/>
            <person name="Sperling S."/>
            <person name="Stupka E."/>
            <person name="Sugiura K."/>
            <person name="Sultana R."/>
            <person name="Takenaka Y."/>
            <person name="Taki K."/>
            <person name="Tammoja K."/>
            <person name="Tan S.L."/>
            <person name="Tang S."/>
            <person name="Taylor M.S."/>
            <person name="Tegner J."/>
            <person name="Teichmann S.A."/>
            <person name="Ueda H.R."/>
            <person name="van Nimwegen E."/>
            <person name="Verardo R."/>
            <person name="Wei C.L."/>
            <person name="Yagi K."/>
            <person name="Yamanishi H."/>
            <person name="Zabarovsky E."/>
            <person name="Zhu S."/>
            <person name="Zimmer A."/>
            <person name="Hide W."/>
            <person name="Bult C."/>
            <person name="Grimmond S.M."/>
            <person name="Teasdale R.D."/>
            <person name="Liu E.T."/>
            <person name="Brusic V."/>
            <person name="Quackenbush J."/>
            <person name="Wahlestedt C."/>
            <person name="Mattick J.S."/>
            <person name="Hume D.A."/>
            <person name="Kai C."/>
            <person name="Sasaki D."/>
            <person name="Tomaru Y."/>
            <person name="Fukuda S."/>
            <person name="Kanamori-Katayama M."/>
            <person name="Suzuki M."/>
            <person name="Aoki J."/>
            <person name="Arakawa T."/>
            <person name="Iida J."/>
            <person name="Imamura K."/>
            <person name="Itoh M."/>
            <person name="Kato T."/>
            <person name="Kawaji H."/>
            <person name="Kawagashira N."/>
            <person name="Kawashima T."/>
            <person name="Kojima M."/>
            <person name="Kondo S."/>
            <person name="Konno H."/>
            <person name="Nakano K."/>
            <person name="Ninomiya N."/>
            <person name="Nishio T."/>
            <person name="Okada M."/>
            <person name="Plessy C."/>
            <person name="Shibata K."/>
            <person name="Shiraki T."/>
            <person name="Suzuki S."/>
            <person name="Tagami M."/>
            <person name="Waki K."/>
            <person name="Watahiki A."/>
            <person name="Okamura-Oho Y."/>
            <person name="Suzuki H."/>
            <person name="Kawai J."/>
            <person name="Hayashizaki Y."/>
        </authorList>
    </citation>
    <scope>NUCLEOTIDE SEQUENCE [LARGE SCALE MRNA] (ISOFORM 1)</scope>
    <scope>NUCLEOTIDE SEQUENCE [LARGE SCALE MRNA] OF 1-698 (ISOFORM 3)</scope>
    <source>
        <strain>C57BL/6J</strain>
        <tissue>Lung</tissue>
        <tissue>Testis</tissue>
    </source>
</reference>
<reference key="3">
    <citation type="journal article" date="2009" name="PLoS Biol.">
        <title>Lineage-specific biology revealed by a finished genome assembly of the mouse.</title>
        <authorList>
            <person name="Church D.M."/>
            <person name="Goodstadt L."/>
            <person name="Hillier L.W."/>
            <person name="Zody M.C."/>
            <person name="Goldstein S."/>
            <person name="She X."/>
            <person name="Bult C.J."/>
            <person name="Agarwala R."/>
            <person name="Cherry J.L."/>
            <person name="DiCuccio M."/>
            <person name="Hlavina W."/>
            <person name="Kapustin Y."/>
            <person name="Meric P."/>
            <person name="Maglott D."/>
            <person name="Birtle Z."/>
            <person name="Marques A.C."/>
            <person name="Graves T."/>
            <person name="Zhou S."/>
            <person name="Teague B."/>
            <person name="Potamousis K."/>
            <person name="Churas C."/>
            <person name="Place M."/>
            <person name="Herschleb J."/>
            <person name="Runnheim R."/>
            <person name="Forrest D."/>
            <person name="Amos-Landgraf J."/>
            <person name="Schwartz D.C."/>
            <person name="Cheng Z."/>
            <person name="Lindblad-Toh K."/>
            <person name="Eichler E.E."/>
            <person name="Ponting C.P."/>
        </authorList>
    </citation>
    <scope>NUCLEOTIDE SEQUENCE [LARGE SCALE GENOMIC DNA]</scope>
    <source>
        <strain>C57BL/6J</strain>
    </source>
</reference>
<reference key="4">
    <citation type="journal article" date="2004" name="Genome Res.">
        <title>The status, quality, and expansion of the NIH full-length cDNA project: the Mammalian Gene Collection (MGC).</title>
        <authorList>
            <consortium name="The MGC Project Team"/>
        </authorList>
    </citation>
    <scope>NUCLEOTIDE SEQUENCE [LARGE SCALE MRNA] (ISOFORMS 1 AND 2)</scope>
</reference>
<reference key="5">
    <citation type="journal article" date="2010" name="Cell">
        <title>A tissue-specific atlas of mouse protein phosphorylation and expression.</title>
        <authorList>
            <person name="Huttlin E.L."/>
            <person name="Jedrychowski M.P."/>
            <person name="Elias J.E."/>
            <person name="Goswami T."/>
            <person name="Rad R."/>
            <person name="Beausoleil S.A."/>
            <person name="Villen J."/>
            <person name="Haas W."/>
            <person name="Sowa M.E."/>
            <person name="Gygi S.P."/>
        </authorList>
    </citation>
    <scope>PHOSPHORYLATION [LARGE SCALE ANALYSIS] AT SER-777 AND THR-799</scope>
    <scope>IDENTIFICATION BY MASS SPECTROMETRY [LARGE SCALE ANALYSIS]</scope>
    <source>
        <tissue>Brain</tissue>
        <tissue>Lung</tissue>
    </source>
</reference>
<dbReference type="EMBL" id="AK173221">
    <property type="protein sequence ID" value="BAD32499.1"/>
    <property type="status" value="ALT_SEQ"/>
    <property type="molecule type" value="Transcribed_RNA"/>
</dbReference>
<dbReference type="EMBL" id="AK018414">
    <property type="protein sequence ID" value="BAB31199.1"/>
    <property type="molecule type" value="mRNA"/>
</dbReference>
<dbReference type="EMBL" id="AK029499">
    <property type="protein sequence ID" value="BAC26478.1"/>
    <property type="molecule type" value="mRNA"/>
</dbReference>
<dbReference type="EMBL" id="AC125360">
    <property type="status" value="NOT_ANNOTATED_CDS"/>
    <property type="molecule type" value="Genomic_DNA"/>
</dbReference>
<dbReference type="EMBL" id="BC111887">
    <property type="protein sequence ID" value="AAI11888.1"/>
    <property type="molecule type" value="mRNA"/>
</dbReference>
<dbReference type="EMBL" id="BC113754">
    <property type="protein sequence ID" value="AAI13755.1"/>
    <property type="molecule type" value="mRNA"/>
</dbReference>
<dbReference type="CCDS" id="CCDS36532.1">
    <molecule id="Q8C0Y0-1"/>
</dbReference>
<dbReference type="RefSeq" id="NP_083256.2">
    <molecule id="Q8C0Y0-1"/>
    <property type="nucleotide sequence ID" value="NM_028980.3"/>
</dbReference>
<dbReference type="RefSeq" id="XP_006516375.1">
    <property type="nucleotide sequence ID" value="XM_006516312.2"/>
</dbReference>
<dbReference type="RefSeq" id="XP_011242496.1">
    <molecule id="Q8C0Y0-2"/>
    <property type="nucleotide sequence ID" value="XM_011244194.4"/>
</dbReference>
<dbReference type="RefSeq" id="XP_030102820.1">
    <molecule id="Q8C0Y0-3"/>
    <property type="nucleotide sequence ID" value="XM_030246960.1"/>
</dbReference>
<dbReference type="RefSeq" id="XP_030102821.1">
    <molecule id="Q8C0Y0-3"/>
    <property type="nucleotide sequence ID" value="XM_030246961.1"/>
</dbReference>
<dbReference type="RefSeq" id="XP_030102822.1">
    <molecule id="Q8C0Y0-3"/>
    <property type="nucleotide sequence ID" value="XM_030246962.1"/>
</dbReference>
<dbReference type="BioGRID" id="216818">
    <property type="interactions" value="5"/>
</dbReference>
<dbReference type="ComplexPortal" id="CPX-165">
    <property type="entry name" value="PPP4C-PPP4R4 protein phosphatase 4 complex"/>
</dbReference>
<dbReference type="FunCoup" id="Q8C0Y0">
    <property type="interactions" value="146"/>
</dbReference>
<dbReference type="IntAct" id="Q8C0Y0">
    <property type="interactions" value="1"/>
</dbReference>
<dbReference type="STRING" id="10090.ENSMUSP00000021631"/>
<dbReference type="GlyGen" id="Q8C0Y0">
    <property type="glycosylation" value="1 site, 1 O-linked glycan (1 site)"/>
</dbReference>
<dbReference type="iPTMnet" id="Q8C0Y0"/>
<dbReference type="PhosphoSitePlus" id="Q8C0Y0"/>
<dbReference type="SwissPalm" id="Q8C0Y0"/>
<dbReference type="PaxDb" id="10090-ENSMUSP00000021631"/>
<dbReference type="PeptideAtlas" id="Q8C0Y0"/>
<dbReference type="ProteomicsDB" id="289795">
    <molecule id="Q8C0Y0-1"/>
</dbReference>
<dbReference type="ProteomicsDB" id="289796">
    <molecule id="Q8C0Y0-2"/>
</dbReference>
<dbReference type="ProteomicsDB" id="289797">
    <molecule id="Q8C0Y0-3"/>
</dbReference>
<dbReference type="Antibodypedia" id="49053">
    <property type="antibodies" value="52 antibodies from 18 providers"/>
</dbReference>
<dbReference type="Ensembl" id="ENSMUST00000021631.12">
    <molecule id="Q8C0Y0-1"/>
    <property type="protein sequence ID" value="ENSMUSP00000021631.6"/>
    <property type="gene ID" value="ENSMUSG00000021209.13"/>
</dbReference>
<dbReference type="Ensembl" id="ENSMUST00000187155.7">
    <molecule id="Q8C0Y0-3"/>
    <property type="protein sequence ID" value="ENSMUSP00000140874.2"/>
    <property type="gene ID" value="ENSMUSG00000021209.13"/>
</dbReference>
<dbReference type="Ensembl" id="ENSMUST00000189871.7">
    <molecule id="Q8C0Y0-2"/>
    <property type="protein sequence ID" value="ENSMUSP00000139786.2"/>
    <property type="gene ID" value="ENSMUSG00000021209.13"/>
</dbReference>
<dbReference type="GeneID" id="74521"/>
<dbReference type="KEGG" id="mmu:74521"/>
<dbReference type="UCSC" id="uc007ovw.2">
    <molecule id="Q8C0Y0-1"/>
    <property type="organism name" value="mouse"/>
</dbReference>
<dbReference type="AGR" id="MGI:1921771"/>
<dbReference type="CTD" id="57718"/>
<dbReference type="MGI" id="MGI:1921771">
    <property type="gene designation" value="Ppp4r4"/>
</dbReference>
<dbReference type="VEuPathDB" id="HostDB:ENSMUSG00000021209"/>
<dbReference type="eggNOG" id="KOG0211">
    <property type="taxonomic scope" value="Eukaryota"/>
</dbReference>
<dbReference type="GeneTree" id="ENSGT00510000047895"/>
<dbReference type="HOGENOM" id="CLU_010601_0_0_1"/>
<dbReference type="InParanoid" id="Q8C0Y0"/>
<dbReference type="OMA" id="CLIDLVE"/>
<dbReference type="OrthoDB" id="340346at2759"/>
<dbReference type="PhylomeDB" id="Q8C0Y0"/>
<dbReference type="TreeFam" id="TF313717"/>
<dbReference type="BioGRID-ORCS" id="74521">
    <property type="hits" value="2 hits in 75 CRISPR screens"/>
</dbReference>
<dbReference type="PRO" id="PR:Q8C0Y0"/>
<dbReference type="Proteomes" id="UP000000589">
    <property type="component" value="Chromosome 12"/>
</dbReference>
<dbReference type="RNAct" id="Q8C0Y0">
    <property type="molecule type" value="protein"/>
</dbReference>
<dbReference type="Bgee" id="ENSMUSG00000021209">
    <property type="expression patterns" value="Expressed in spermatid and 110 other cell types or tissues"/>
</dbReference>
<dbReference type="ExpressionAtlas" id="Q8C0Y0">
    <property type="expression patterns" value="baseline and differential"/>
</dbReference>
<dbReference type="GO" id="GO:0036064">
    <property type="term" value="C:ciliary basal body"/>
    <property type="evidence" value="ECO:0007669"/>
    <property type="project" value="Ensembl"/>
</dbReference>
<dbReference type="GO" id="GO:0005737">
    <property type="term" value="C:cytoplasm"/>
    <property type="evidence" value="ECO:0000250"/>
    <property type="project" value="UniProtKB"/>
</dbReference>
<dbReference type="GO" id="GO:0005829">
    <property type="term" value="C:cytosol"/>
    <property type="evidence" value="ECO:0007669"/>
    <property type="project" value="Ensembl"/>
</dbReference>
<dbReference type="GO" id="GO:0043231">
    <property type="term" value="C:intracellular membrane-bounded organelle"/>
    <property type="evidence" value="ECO:0007669"/>
    <property type="project" value="Ensembl"/>
</dbReference>
<dbReference type="GO" id="GO:0008287">
    <property type="term" value="C:protein serine/threonine phosphatase complex"/>
    <property type="evidence" value="ECO:0000250"/>
    <property type="project" value="UniProtKB"/>
</dbReference>
<dbReference type="GO" id="GO:0004864">
    <property type="term" value="F:protein phosphatase inhibitor activity"/>
    <property type="evidence" value="ECO:0000266"/>
    <property type="project" value="MGI"/>
</dbReference>
<dbReference type="GO" id="GO:0019888">
    <property type="term" value="F:protein phosphatase regulator activity"/>
    <property type="evidence" value="ECO:0000266"/>
    <property type="project" value="MGI"/>
</dbReference>
<dbReference type="GO" id="GO:0004865">
    <property type="term" value="F:protein serine/threonine phosphatase inhibitor activity"/>
    <property type="evidence" value="ECO:0000266"/>
    <property type="project" value="MGI"/>
</dbReference>
<dbReference type="GO" id="GO:0001835">
    <property type="term" value="P:blastocyst hatching"/>
    <property type="evidence" value="ECO:0000315"/>
    <property type="project" value="MGI"/>
</dbReference>
<dbReference type="FunFam" id="1.25.10.10:FF:000097">
    <property type="entry name" value="Serine/threonine-protein phosphatase 4 regulatory subunit 4"/>
    <property type="match status" value="1"/>
</dbReference>
<dbReference type="Gene3D" id="1.25.10.10">
    <property type="entry name" value="Leucine-rich Repeat Variant"/>
    <property type="match status" value="1"/>
</dbReference>
<dbReference type="InterPro" id="IPR011989">
    <property type="entry name" value="ARM-like"/>
</dbReference>
<dbReference type="InterPro" id="IPR016024">
    <property type="entry name" value="ARM-type_fold"/>
</dbReference>
<dbReference type="InterPro" id="IPR000357">
    <property type="entry name" value="HEAT"/>
</dbReference>
<dbReference type="InterPro" id="IPR021133">
    <property type="entry name" value="HEAT_type_2"/>
</dbReference>
<dbReference type="InterPro" id="IPR039918">
    <property type="entry name" value="PPP4R4"/>
</dbReference>
<dbReference type="PANTHER" id="PTHR21467">
    <property type="entry name" value="PROTEIN PHOSPHATASE 4 REGULATORY SUBUNIT 4 PPP4R4"/>
    <property type="match status" value="1"/>
</dbReference>
<dbReference type="PANTHER" id="PTHR21467:SF0">
    <property type="entry name" value="SERINE_THREONINE-PROTEIN PHOSPHATASE 4 REGULATORY SUBUNIT 4"/>
    <property type="match status" value="1"/>
</dbReference>
<dbReference type="Pfam" id="PF02985">
    <property type="entry name" value="HEAT"/>
    <property type="match status" value="1"/>
</dbReference>
<dbReference type="SUPFAM" id="SSF48371">
    <property type="entry name" value="ARM repeat"/>
    <property type="match status" value="1"/>
</dbReference>
<dbReference type="PROSITE" id="PS50077">
    <property type="entry name" value="HEAT_REPEAT"/>
    <property type="match status" value="2"/>
</dbReference>
<comment type="function">
    <text evidence="1">Putative regulatory subunit of serine/threonine-protein phosphatase 4.</text>
</comment>
<comment type="subunit">
    <text evidence="1">Serine/threonine-protein phosphatase 4 (PP4) occurs in different assemblies of the catalytic and one or more regulatory subunits. Component of the PP4 complex PPP4C-PPP4R4 (By similarity).</text>
</comment>
<comment type="subcellular location">
    <subcellularLocation>
        <location>Cytoplasm</location>
    </subcellularLocation>
</comment>
<comment type="alternative products">
    <event type="alternative splicing"/>
    <isoform>
        <id>Q8C0Y0-1</id>
        <name>1</name>
        <sequence type="displayed"/>
    </isoform>
    <isoform>
        <id>Q8C0Y0-2</id>
        <name>2</name>
        <sequence type="described" ref="VSP_029619 VSP_029620"/>
    </isoform>
    <isoform>
        <id>Q8C0Y0-3</id>
        <name>3</name>
        <sequence type="described" ref="VSP_029618"/>
    </isoform>
</comment>
<comment type="miscellaneous">
    <molecule>Isoform 2</molecule>
    <text evidence="7">May be produced at very low levels due to a premature stop codon in the mRNA, leading to nonsense-mediated mRNA decay.</text>
</comment>
<comment type="sequence caution" evidence="7">
    <conflict type="miscellaneous discrepancy">
        <sequence resource="EMBL-CDS" id="BAD32499"/>
    </conflict>
    <text>Intron retention.</text>
</comment>
<proteinExistence type="evidence at protein level"/>
<name>PP4R4_MOUSE</name>
<accession>Q8C0Y0</accession>
<accession>E9QKU6</accession>
<accession>Q14CI7</accession>
<accession>Q14DT1</accession>
<accession>Q69ZE5</accession>
<accession>Q9CRR0</accession>
<gene>
    <name type="primary">Ppp4r4</name>
    <name type="synonym">Kiaa1622</name>
    <name type="synonym">Pp4r4</name>
</gene>
<sequence>MHPPPPDAGVAMDFGQNSLFGYMEDLQELTIIERPVRRSLKTPEEIERLTVDEDLSDIDRAVYLLSAGQDVQGASVIANLPFLMRQNPTETLRRVLPKVREVLHVASVEMQLTAAVSFLTILQEESMSVHTCAHSFLQVILLHLEHRDTGVSNAWLETLLSAVELLPKETLRHEILNPLVSKAQLSQTVQSRLVSCKILGKITNKFDAHSIKREILPLVKSLCQDVEYEVRSCMCRQLENIAQGIGAELTKNVVLPELIELSRDESGSVRLAAFETLVNMLDMFDTDDRSQTILPLVKSFCEKSFKADESILISLSFHLGKLCHGLYGIFTPDQHLRFLEFYKKLCTLGLQQENGHNESQIPSQIVEQEKKYTSVRKNCAYNFPAMIVFVDPKNFHMELYSTFFCLCHDPEVPVRHTIAICFYEVSKLLNSGVHLIHKELITLLQDESLEVLDALINHLPEILELMSTGGENSVQENKFSSVPDLIPALTAAEQRAAASLKWRTHEKLLQKYTCLPHIISSDQIYYRFLQRMFTIMMTNNVLPVQRAAARTLCIFLRYNRKQEQRHEVIQKLIEQLGQGKSYWNRLRFLDTCEFIIEIFSRSFFCKYFFLPVIELTHDPVANVRMKLCYLLPKVKSALKIPADMHLLQQLEMCVRKLLCQEKDKDVLAIVKKTVLELDRMEMSMDMFQKKNYEKDLLDQEKEREELLFLEMEQLEKEKHQSDGRLASDKSFEKKRRDSRTSTQSLSKNLPISVPGPSSSTASTSKEIKKSKLTRSQSFNNQAFHAKYGTLDKCASKSSTLAHTSSVSGLVRTAMLSLTDDSFRTRNASSVPASFSPNPVMPSTSRGPGNTADPKSSGSKDAQPRKATLKSRKSNP</sequence>